<proteinExistence type="inferred from homology"/>
<protein>
    <recommendedName>
        <fullName evidence="1">Ribonuclease HII</fullName>
        <shortName evidence="1">RNase HII</shortName>
        <ecNumber evidence="1">3.1.26.4</ecNumber>
    </recommendedName>
</protein>
<accession>Q986D0</accession>
<evidence type="ECO:0000255" key="1">
    <source>
        <dbReference type="HAMAP-Rule" id="MF_00052"/>
    </source>
</evidence>
<evidence type="ECO:0000255" key="2">
    <source>
        <dbReference type="PROSITE-ProRule" id="PRU01319"/>
    </source>
</evidence>
<organism>
    <name type="scientific">Mesorhizobium japonicum (strain LMG 29417 / CECT 9101 / MAFF 303099)</name>
    <name type="common">Mesorhizobium loti (strain MAFF 303099)</name>
    <dbReference type="NCBI Taxonomy" id="266835"/>
    <lineage>
        <taxon>Bacteria</taxon>
        <taxon>Pseudomonadati</taxon>
        <taxon>Pseudomonadota</taxon>
        <taxon>Alphaproteobacteria</taxon>
        <taxon>Hyphomicrobiales</taxon>
        <taxon>Phyllobacteriaceae</taxon>
        <taxon>Mesorhizobium</taxon>
    </lineage>
</organism>
<gene>
    <name evidence="1" type="primary">rnhB</name>
    <name type="ordered locus">mll7416</name>
</gene>
<keyword id="KW-0963">Cytoplasm</keyword>
<keyword id="KW-0255">Endonuclease</keyword>
<keyword id="KW-0378">Hydrolase</keyword>
<keyword id="KW-0464">Manganese</keyword>
<keyword id="KW-0479">Metal-binding</keyword>
<keyword id="KW-0540">Nuclease</keyword>
<reference key="1">
    <citation type="journal article" date="2000" name="DNA Res.">
        <title>Complete genome structure of the nitrogen-fixing symbiotic bacterium Mesorhizobium loti.</title>
        <authorList>
            <person name="Kaneko T."/>
            <person name="Nakamura Y."/>
            <person name="Sato S."/>
            <person name="Asamizu E."/>
            <person name="Kato T."/>
            <person name="Sasamoto S."/>
            <person name="Watanabe A."/>
            <person name="Idesawa K."/>
            <person name="Ishikawa A."/>
            <person name="Kawashima K."/>
            <person name="Kimura T."/>
            <person name="Kishida Y."/>
            <person name="Kiyokawa C."/>
            <person name="Kohara M."/>
            <person name="Matsumoto M."/>
            <person name="Matsuno A."/>
            <person name="Mochizuki Y."/>
            <person name="Nakayama S."/>
            <person name="Nakazaki N."/>
            <person name="Shimpo S."/>
            <person name="Sugimoto M."/>
            <person name="Takeuchi C."/>
            <person name="Yamada M."/>
            <person name="Tabata S."/>
        </authorList>
    </citation>
    <scope>NUCLEOTIDE SEQUENCE [LARGE SCALE GENOMIC DNA]</scope>
    <source>
        <strain>LMG 29417 / CECT 9101 / MAFF 303099</strain>
    </source>
</reference>
<feature type="chain" id="PRO_0000111609" description="Ribonuclease HII">
    <location>
        <begin position="1"/>
        <end position="231"/>
    </location>
</feature>
<feature type="domain" description="RNase H type-2" evidence="2">
    <location>
        <begin position="32"/>
        <end position="223"/>
    </location>
</feature>
<feature type="binding site" evidence="1">
    <location>
        <position position="38"/>
    </location>
    <ligand>
        <name>a divalent metal cation</name>
        <dbReference type="ChEBI" id="CHEBI:60240"/>
    </ligand>
</feature>
<feature type="binding site" evidence="1">
    <location>
        <position position="39"/>
    </location>
    <ligand>
        <name>a divalent metal cation</name>
        <dbReference type="ChEBI" id="CHEBI:60240"/>
    </ligand>
</feature>
<feature type="binding site" evidence="1">
    <location>
        <position position="130"/>
    </location>
    <ligand>
        <name>a divalent metal cation</name>
        <dbReference type="ChEBI" id="CHEBI:60240"/>
    </ligand>
</feature>
<comment type="function">
    <text evidence="1">Endonuclease that specifically degrades the RNA of RNA-DNA hybrids.</text>
</comment>
<comment type="catalytic activity">
    <reaction evidence="1">
        <text>Endonucleolytic cleavage to 5'-phosphomonoester.</text>
        <dbReference type="EC" id="3.1.26.4"/>
    </reaction>
</comment>
<comment type="cofactor">
    <cofactor evidence="1">
        <name>Mn(2+)</name>
        <dbReference type="ChEBI" id="CHEBI:29035"/>
    </cofactor>
    <cofactor evidence="1">
        <name>Mg(2+)</name>
        <dbReference type="ChEBI" id="CHEBI:18420"/>
    </cofactor>
    <text evidence="1">Manganese or magnesium. Binds 1 divalent metal ion per monomer in the absence of substrate. May bind a second metal ion after substrate binding.</text>
</comment>
<comment type="subcellular location">
    <subcellularLocation>
        <location evidence="1">Cytoplasm</location>
    </subcellularLocation>
</comment>
<comment type="similarity">
    <text evidence="1">Belongs to the RNase HII family.</text>
</comment>
<sequence>MARARSDSPLLFEIVEKPDFSFETKAMADGLWPVAGMDEAGRGPLAGPVVAAAVVLDPANIPEGLDDSKRLSHFQREALFLRILGSAQAVSMASISAEGIDGSNILKASLEAMRRALVGLSVRPKLALADGRDVPPGLPCDGRALIKGDQRSQSIAAASIVAKVMRDRMMCGCGSHHDRYGFEVHMGYATARHRTAIETHGPVARLHRVSFAPFRLGGTEVVEEESLAGLD</sequence>
<dbReference type="EC" id="3.1.26.4" evidence="1"/>
<dbReference type="EMBL" id="BA000012">
    <property type="protein sequence ID" value="BAB53523.1"/>
    <property type="molecule type" value="Genomic_DNA"/>
</dbReference>
<dbReference type="RefSeq" id="WP_010914830.1">
    <property type="nucleotide sequence ID" value="NC_002678.2"/>
</dbReference>
<dbReference type="SMR" id="Q986D0"/>
<dbReference type="KEGG" id="mlo:mll7416"/>
<dbReference type="PATRIC" id="fig|266835.9.peg.5920"/>
<dbReference type="eggNOG" id="COG0164">
    <property type="taxonomic scope" value="Bacteria"/>
</dbReference>
<dbReference type="HOGENOM" id="CLU_036532_3_2_5"/>
<dbReference type="Proteomes" id="UP000000552">
    <property type="component" value="Chromosome"/>
</dbReference>
<dbReference type="GO" id="GO:0005737">
    <property type="term" value="C:cytoplasm"/>
    <property type="evidence" value="ECO:0007669"/>
    <property type="project" value="UniProtKB-SubCell"/>
</dbReference>
<dbReference type="GO" id="GO:0032299">
    <property type="term" value="C:ribonuclease H2 complex"/>
    <property type="evidence" value="ECO:0007669"/>
    <property type="project" value="TreeGrafter"/>
</dbReference>
<dbReference type="GO" id="GO:0030145">
    <property type="term" value="F:manganese ion binding"/>
    <property type="evidence" value="ECO:0007669"/>
    <property type="project" value="UniProtKB-UniRule"/>
</dbReference>
<dbReference type="GO" id="GO:0003723">
    <property type="term" value="F:RNA binding"/>
    <property type="evidence" value="ECO:0007669"/>
    <property type="project" value="InterPro"/>
</dbReference>
<dbReference type="GO" id="GO:0004523">
    <property type="term" value="F:RNA-DNA hybrid ribonuclease activity"/>
    <property type="evidence" value="ECO:0007669"/>
    <property type="project" value="UniProtKB-UniRule"/>
</dbReference>
<dbReference type="GO" id="GO:0043137">
    <property type="term" value="P:DNA replication, removal of RNA primer"/>
    <property type="evidence" value="ECO:0007669"/>
    <property type="project" value="TreeGrafter"/>
</dbReference>
<dbReference type="GO" id="GO:0006298">
    <property type="term" value="P:mismatch repair"/>
    <property type="evidence" value="ECO:0007669"/>
    <property type="project" value="TreeGrafter"/>
</dbReference>
<dbReference type="CDD" id="cd07182">
    <property type="entry name" value="RNase_HII_bacteria_HII_like"/>
    <property type="match status" value="1"/>
</dbReference>
<dbReference type="Gene3D" id="3.30.420.10">
    <property type="entry name" value="Ribonuclease H-like superfamily/Ribonuclease H"/>
    <property type="match status" value="1"/>
</dbReference>
<dbReference type="HAMAP" id="MF_00052_B">
    <property type="entry name" value="RNase_HII_B"/>
    <property type="match status" value="1"/>
</dbReference>
<dbReference type="InterPro" id="IPR022898">
    <property type="entry name" value="RNase_HII"/>
</dbReference>
<dbReference type="InterPro" id="IPR001352">
    <property type="entry name" value="RNase_HII/HIII"/>
</dbReference>
<dbReference type="InterPro" id="IPR024567">
    <property type="entry name" value="RNase_HII/HIII_dom"/>
</dbReference>
<dbReference type="InterPro" id="IPR012337">
    <property type="entry name" value="RNaseH-like_sf"/>
</dbReference>
<dbReference type="InterPro" id="IPR036397">
    <property type="entry name" value="RNaseH_sf"/>
</dbReference>
<dbReference type="NCBIfam" id="NF000595">
    <property type="entry name" value="PRK00015.1-3"/>
    <property type="match status" value="1"/>
</dbReference>
<dbReference type="PANTHER" id="PTHR10954">
    <property type="entry name" value="RIBONUCLEASE H2 SUBUNIT A"/>
    <property type="match status" value="1"/>
</dbReference>
<dbReference type="PANTHER" id="PTHR10954:SF18">
    <property type="entry name" value="RIBONUCLEASE HII"/>
    <property type="match status" value="1"/>
</dbReference>
<dbReference type="Pfam" id="PF01351">
    <property type="entry name" value="RNase_HII"/>
    <property type="match status" value="1"/>
</dbReference>
<dbReference type="SUPFAM" id="SSF53098">
    <property type="entry name" value="Ribonuclease H-like"/>
    <property type="match status" value="1"/>
</dbReference>
<dbReference type="PROSITE" id="PS51975">
    <property type="entry name" value="RNASE_H_2"/>
    <property type="match status" value="1"/>
</dbReference>
<name>RNH2_RHILO</name>